<keyword id="KW-0028">Amino-acid biosynthesis</keyword>
<keyword id="KW-0055">Arginine biosynthesis</keyword>
<keyword id="KW-0067">ATP-binding</keyword>
<keyword id="KW-0963">Cytoplasm</keyword>
<keyword id="KW-0436">Ligase</keyword>
<keyword id="KW-0547">Nucleotide-binding</keyword>
<keyword id="KW-1185">Reference proteome</keyword>
<accession>A7GYN4</accession>
<organism>
    <name type="scientific">Campylobacter curvus (strain 525.92)</name>
    <dbReference type="NCBI Taxonomy" id="360105"/>
    <lineage>
        <taxon>Bacteria</taxon>
        <taxon>Pseudomonadati</taxon>
        <taxon>Campylobacterota</taxon>
        <taxon>Epsilonproteobacteria</taxon>
        <taxon>Campylobacterales</taxon>
        <taxon>Campylobacteraceae</taxon>
        <taxon>Campylobacter</taxon>
    </lineage>
</organism>
<evidence type="ECO:0000255" key="1">
    <source>
        <dbReference type="HAMAP-Rule" id="MF_00005"/>
    </source>
</evidence>
<evidence type="ECO:0000305" key="2"/>
<proteinExistence type="inferred from homology"/>
<gene>
    <name evidence="1" type="primary">argG</name>
    <name type="ordered locus">Ccur92_10220</name>
    <name type="ORF">CCV52592_1976</name>
</gene>
<name>ASSY_CAMC5</name>
<protein>
    <recommendedName>
        <fullName evidence="1">Argininosuccinate synthase</fullName>
        <ecNumber evidence="1">6.3.4.5</ecNumber>
    </recommendedName>
    <alternativeName>
        <fullName evidence="1">Citrulline--aspartate ligase</fullName>
    </alternativeName>
</protein>
<comment type="catalytic activity">
    <reaction evidence="1">
        <text>L-citrulline + L-aspartate + ATP = 2-(N(omega)-L-arginino)succinate + AMP + diphosphate + H(+)</text>
        <dbReference type="Rhea" id="RHEA:10932"/>
        <dbReference type="ChEBI" id="CHEBI:15378"/>
        <dbReference type="ChEBI" id="CHEBI:29991"/>
        <dbReference type="ChEBI" id="CHEBI:30616"/>
        <dbReference type="ChEBI" id="CHEBI:33019"/>
        <dbReference type="ChEBI" id="CHEBI:57472"/>
        <dbReference type="ChEBI" id="CHEBI:57743"/>
        <dbReference type="ChEBI" id="CHEBI:456215"/>
        <dbReference type="EC" id="6.3.4.5"/>
    </reaction>
</comment>
<comment type="pathway">
    <text evidence="1">Amino-acid biosynthesis; L-arginine biosynthesis; L-arginine from L-ornithine and carbamoyl phosphate: step 2/3.</text>
</comment>
<comment type="subunit">
    <text evidence="1">Homotetramer.</text>
</comment>
<comment type="subcellular location">
    <subcellularLocation>
        <location evidence="1">Cytoplasm</location>
    </subcellularLocation>
</comment>
<comment type="similarity">
    <text evidence="1">Belongs to the argininosuccinate synthase family. Type 1 subfamily.</text>
</comment>
<comment type="sequence caution" evidence="2">
    <conflict type="erroneous initiation">
        <sequence resource="EMBL-CDS" id="EAU00548"/>
    </conflict>
</comment>
<reference key="1">
    <citation type="submission" date="2007-07" db="EMBL/GenBank/DDBJ databases">
        <title>Genome sequence of Campylobacter curvus 525.92 isolated from human feces.</title>
        <authorList>
            <person name="Fouts D.E."/>
            <person name="Mongodin E.F."/>
            <person name="Puiu D."/>
            <person name="Sebastian Y."/>
            <person name="Miller W.G."/>
            <person name="Mandrell R.E."/>
            <person name="Lastovica A.J."/>
            <person name="Nelson K.E."/>
        </authorList>
    </citation>
    <scope>NUCLEOTIDE SEQUENCE [LARGE SCALE GENOMIC DNA]</scope>
    <source>
        <strain>525.92</strain>
    </source>
</reference>
<dbReference type="EC" id="6.3.4.5" evidence="1"/>
<dbReference type="EMBL" id="CP000767">
    <property type="protein sequence ID" value="EAU00548.2"/>
    <property type="status" value="ALT_INIT"/>
    <property type="molecule type" value="Genomic_DNA"/>
</dbReference>
<dbReference type="RefSeq" id="WP_041743298.1">
    <property type="nucleotide sequence ID" value="NC_009715.2"/>
</dbReference>
<dbReference type="SMR" id="A7GYN4"/>
<dbReference type="STRING" id="360105.CCV52592_1976"/>
<dbReference type="KEGG" id="ccv:CCV52592_1976"/>
<dbReference type="HOGENOM" id="CLU_032784_4_2_7"/>
<dbReference type="OrthoDB" id="9801641at2"/>
<dbReference type="UniPathway" id="UPA00068">
    <property type="reaction ID" value="UER00113"/>
</dbReference>
<dbReference type="Proteomes" id="UP000006380">
    <property type="component" value="Chromosome"/>
</dbReference>
<dbReference type="GO" id="GO:0005737">
    <property type="term" value="C:cytoplasm"/>
    <property type="evidence" value="ECO:0007669"/>
    <property type="project" value="UniProtKB-SubCell"/>
</dbReference>
<dbReference type="GO" id="GO:0004055">
    <property type="term" value="F:argininosuccinate synthase activity"/>
    <property type="evidence" value="ECO:0007669"/>
    <property type="project" value="UniProtKB-UniRule"/>
</dbReference>
<dbReference type="GO" id="GO:0005524">
    <property type="term" value="F:ATP binding"/>
    <property type="evidence" value="ECO:0007669"/>
    <property type="project" value="UniProtKB-UniRule"/>
</dbReference>
<dbReference type="GO" id="GO:0000053">
    <property type="term" value="P:argininosuccinate metabolic process"/>
    <property type="evidence" value="ECO:0007669"/>
    <property type="project" value="TreeGrafter"/>
</dbReference>
<dbReference type="GO" id="GO:0006526">
    <property type="term" value="P:L-arginine biosynthetic process"/>
    <property type="evidence" value="ECO:0007669"/>
    <property type="project" value="UniProtKB-UniRule"/>
</dbReference>
<dbReference type="GO" id="GO:0000050">
    <property type="term" value="P:urea cycle"/>
    <property type="evidence" value="ECO:0007669"/>
    <property type="project" value="TreeGrafter"/>
</dbReference>
<dbReference type="CDD" id="cd01999">
    <property type="entry name" value="ASS"/>
    <property type="match status" value="1"/>
</dbReference>
<dbReference type="FunFam" id="3.40.50.620:FF:000019">
    <property type="entry name" value="Argininosuccinate synthase"/>
    <property type="match status" value="1"/>
</dbReference>
<dbReference type="FunFam" id="3.90.1260.10:FF:000007">
    <property type="entry name" value="Argininosuccinate synthase"/>
    <property type="match status" value="1"/>
</dbReference>
<dbReference type="Gene3D" id="3.90.1260.10">
    <property type="entry name" value="Argininosuccinate synthetase, chain A, domain 2"/>
    <property type="match status" value="1"/>
</dbReference>
<dbReference type="Gene3D" id="3.40.50.620">
    <property type="entry name" value="HUPs"/>
    <property type="match status" value="1"/>
</dbReference>
<dbReference type="Gene3D" id="1.20.5.470">
    <property type="entry name" value="Single helix bin"/>
    <property type="match status" value="1"/>
</dbReference>
<dbReference type="HAMAP" id="MF_00005">
    <property type="entry name" value="Arg_succ_synth_type1"/>
    <property type="match status" value="1"/>
</dbReference>
<dbReference type="InterPro" id="IPR048268">
    <property type="entry name" value="Arginosuc_syn_C"/>
</dbReference>
<dbReference type="InterPro" id="IPR048267">
    <property type="entry name" value="Arginosuc_syn_N"/>
</dbReference>
<dbReference type="InterPro" id="IPR001518">
    <property type="entry name" value="Arginosuc_synth"/>
</dbReference>
<dbReference type="InterPro" id="IPR018223">
    <property type="entry name" value="Arginosuc_synth_CS"/>
</dbReference>
<dbReference type="InterPro" id="IPR023434">
    <property type="entry name" value="Arginosuc_synth_type_1_subfam"/>
</dbReference>
<dbReference type="InterPro" id="IPR024074">
    <property type="entry name" value="AS_cat/multimer_dom_body"/>
</dbReference>
<dbReference type="InterPro" id="IPR014729">
    <property type="entry name" value="Rossmann-like_a/b/a_fold"/>
</dbReference>
<dbReference type="NCBIfam" id="TIGR00032">
    <property type="entry name" value="argG"/>
    <property type="match status" value="1"/>
</dbReference>
<dbReference type="NCBIfam" id="NF001770">
    <property type="entry name" value="PRK00509.1"/>
    <property type="match status" value="1"/>
</dbReference>
<dbReference type="PANTHER" id="PTHR11587">
    <property type="entry name" value="ARGININOSUCCINATE SYNTHASE"/>
    <property type="match status" value="1"/>
</dbReference>
<dbReference type="PANTHER" id="PTHR11587:SF2">
    <property type="entry name" value="ARGININOSUCCINATE SYNTHASE"/>
    <property type="match status" value="1"/>
</dbReference>
<dbReference type="Pfam" id="PF20979">
    <property type="entry name" value="Arginosuc_syn_C"/>
    <property type="match status" value="1"/>
</dbReference>
<dbReference type="Pfam" id="PF00764">
    <property type="entry name" value="Arginosuc_synth"/>
    <property type="match status" value="1"/>
</dbReference>
<dbReference type="SUPFAM" id="SSF52402">
    <property type="entry name" value="Adenine nucleotide alpha hydrolases-like"/>
    <property type="match status" value="1"/>
</dbReference>
<dbReference type="SUPFAM" id="SSF69864">
    <property type="entry name" value="Argininosuccinate synthetase, C-terminal domain"/>
    <property type="match status" value="1"/>
</dbReference>
<dbReference type="PROSITE" id="PS00564">
    <property type="entry name" value="ARGININOSUCCIN_SYN_1"/>
    <property type="match status" value="1"/>
</dbReference>
<dbReference type="PROSITE" id="PS00565">
    <property type="entry name" value="ARGININOSUCCIN_SYN_2"/>
    <property type="match status" value="1"/>
</dbReference>
<sequence length="406" mass="45731">MKKDVKKVVLAYSGGLDTSIILKWLQDEYKCEVVTFTADIGQGEELEPARKKALALGVKPENIFIEDLREEFVRDYVFPMFRANAIYEGEYLLGTSIARPLIAKRQAEIAKLTGADGVSHGATGKGNDQVRFELAYYAINPNLKVIVPWREWDLNSREKLLAYAEKNGIDITRKPGKSPYSMDANLLHISYEGLVLEDPNHAPENDMWRWCVSPKDAPNESEIITIGYEKGDPVSINGKKMSPAEILTELNHLGAKHGIGRLDLVENRYVGMKSRGCYETPGGTIMLKAHRAIESITLDRGSAHLKDELMPRYAELIYNGFWFSPERLMLQAAIDKSQEHVNGEVRVELYKGNVTILGRSSKDDNLFSEAYCTFEEDSVYNPKDADGFIKLNALRFIIASKNGRKF</sequence>
<feature type="chain" id="PRO_0000321304" description="Argininosuccinate synthase">
    <location>
        <begin position="1"/>
        <end position="406"/>
    </location>
</feature>
<feature type="binding site" evidence="1">
    <location>
        <begin position="11"/>
        <end position="19"/>
    </location>
    <ligand>
        <name>ATP</name>
        <dbReference type="ChEBI" id="CHEBI:30616"/>
    </ligand>
</feature>
<feature type="binding site" evidence="1">
    <location>
        <position position="38"/>
    </location>
    <ligand>
        <name>ATP</name>
        <dbReference type="ChEBI" id="CHEBI:30616"/>
    </ligand>
</feature>
<feature type="binding site" evidence="1">
    <location>
        <position position="91"/>
    </location>
    <ligand>
        <name>L-citrulline</name>
        <dbReference type="ChEBI" id="CHEBI:57743"/>
    </ligand>
</feature>
<feature type="binding site" evidence="1">
    <location>
        <position position="96"/>
    </location>
    <ligand>
        <name>L-citrulline</name>
        <dbReference type="ChEBI" id="CHEBI:57743"/>
    </ligand>
</feature>
<feature type="binding site" evidence="1">
    <location>
        <position position="121"/>
    </location>
    <ligand>
        <name>ATP</name>
        <dbReference type="ChEBI" id="CHEBI:30616"/>
    </ligand>
</feature>
<feature type="binding site" evidence="1">
    <location>
        <position position="123"/>
    </location>
    <ligand>
        <name>L-aspartate</name>
        <dbReference type="ChEBI" id="CHEBI:29991"/>
    </ligand>
</feature>
<feature type="binding site" evidence="1">
    <location>
        <position position="127"/>
    </location>
    <ligand>
        <name>L-aspartate</name>
        <dbReference type="ChEBI" id="CHEBI:29991"/>
    </ligand>
</feature>
<feature type="binding site" evidence="1">
    <location>
        <position position="127"/>
    </location>
    <ligand>
        <name>L-citrulline</name>
        <dbReference type="ChEBI" id="CHEBI:57743"/>
    </ligand>
</feature>
<feature type="binding site" evidence="1">
    <location>
        <position position="128"/>
    </location>
    <ligand>
        <name>L-aspartate</name>
        <dbReference type="ChEBI" id="CHEBI:29991"/>
    </ligand>
</feature>
<feature type="binding site" evidence="1">
    <location>
        <position position="131"/>
    </location>
    <ligand>
        <name>L-citrulline</name>
        <dbReference type="ChEBI" id="CHEBI:57743"/>
    </ligand>
</feature>
<feature type="binding site" evidence="1">
    <location>
        <position position="181"/>
    </location>
    <ligand>
        <name>L-citrulline</name>
        <dbReference type="ChEBI" id="CHEBI:57743"/>
    </ligand>
</feature>
<feature type="binding site" evidence="1">
    <location>
        <position position="190"/>
    </location>
    <ligand>
        <name>L-citrulline</name>
        <dbReference type="ChEBI" id="CHEBI:57743"/>
    </ligand>
</feature>
<feature type="binding site" evidence="1">
    <location>
        <position position="266"/>
    </location>
    <ligand>
        <name>L-citrulline</name>
        <dbReference type="ChEBI" id="CHEBI:57743"/>
    </ligand>
</feature>
<feature type="binding site" evidence="1">
    <location>
        <position position="278"/>
    </location>
    <ligand>
        <name>L-citrulline</name>
        <dbReference type="ChEBI" id="CHEBI:57743"/>
    </ligand>
</feature>